<accession>A5EV41</accession>
<dbReference type="EC" id="2.4.2.1" evidence="2"/>
<dbReference type="EMBL" id="CP000513">
    <property type="protein sequence ID" value="ABQ13931.1"/>
    <property type="molecule type" value="Genomic_DNA"/>
</dbReference>
<dbReference type="RefSeq" id="WP_012031033.1">
    <property type="nucleotide sequence ID" value="NC_009446.1"/>
</dbReference>
<dbReference type="SMR" id="A5EV41"/>
<dbReference type="STRING" id="246195.DNO_0699"/>
<dbReference type="KEGG" id="dno:DNO_0699"/>
<dbReference type="eggNOG" id="COG0813">
    <property type="taxonomic scope" value="Bacteria"/>
</dbReference>
<dbReference type="HOGENOM" id="CLU_068457_2_0_6"/>
<dbReference type="OrthoDB" id="9782889at2"/>
<dbReference type="Proteomes" id="UP000000248">
    <property type="component" value="Chromosome"/>
</dbReference>
<dbReference type="GO" id="GO:0005829">
    <property type="term" value="C:cytosol"/>
    <property type="evidence" value="ECO:0007669"/>
    <property type="project" value="TreeGrafter"/>
</dbReference>
<dbReference type="GO" id="GO:0004731">
    <property type="term" value="F:purine-nucleoside phosphorylase activity"/>
    <property type="evidence" value="ECO:0007669"/>
    <property type="project" value="UniProtKB-UniRule"/>
</dbReference>
<dbReference type="GO" id="GO:0006152">
    <property type="term" value="P:purine nucleoside catabolic process"/>
    <property type="evidence" value="ECO:0007669"/>
    <property type="project" value="TreeGrafter"/>
</dbReference>
<dbReference type="CDD" id="cd09006">
    <property type="entry name" value="PNP_EcPNPI-like"/>
    <property type="match status" value="1"/>
</dbReference>
<dbReference type="Gene3D" id="3.40.50.1580">
    <property type="entry name" value="Nucleoside phosphorylase domain"/>
    <property type="match status" value="1"/>
</dbReference>
<dbReference type="HAMAP" id="MF_01627">
    <property type="entry name" value="Pur_nucleosid_phosp"/>
    <property type="match status" value="1"/>
</dbReference>
<dbReference type="InterPro" id="IPR004402">
    <property type="entry name" value="DeoD-type"/>
</dbReference>
<dbReference type="InterPro" id="IPR018016">
    <property type="entry name" value="Nucleoside_phosphorylase_CS"/>
</dbReference>
<dbReference type="InterPro" id="IPR000845">
    <property type="entry name" value="Nucleoside_phosphorylase_d"/>
</dbReference>
<dbReference type="InterPro" id="IPR035994">
    <property type="entry name" value="Nucleoside_phosphorylase_sf"/>
</dbReference>
<dbReference type="NCBIfam" id="TIGR00107">
    <property type="entry name" value="deoD"/>
    <property type="match status" value="1"/>
</dbReference>
<dbReference type="NCBIfam" id="NF004489">
    <property type="entry name" value="PRK05819.1"/>
    <property type="match status" value="1"/>
</dbReference>
<dbReference type="NCBIfam" id="NF009914">
    <property type="entry name" value="PRK13374.1"/>
    <property type="match status" value="1"/>
</dbReference>
<dbReference type="PANTHER" id="PTHR43691:SF11">
    <property type="entry name" value="FI09636P-RELATED"/>
    <property type="match status" value="1"/>
</dbReference>
<dbReference type="PANTHER" id="PTHR43691">
    <property type="entry name" value="URIDINE PHOSPHORYLASE"/>
    <property type="match status" value="1"/>
</dbReference>
<dbReference type="Pfam" id="PF01048">
    <property type="entry name" value="PNP_UDP_1"/>
    <property type="match status" value="1"/>
</dbReference>
<dbReference type="SUPFAM" id="SSF53167">
    <property type="entry name" value="Purine and uridine phosphorylases"/>
    <property type="match status" value="1"/>
</dbReference>
<dbReference type="PROSITE" id="PS01232">
    <property type="entry name" value="PNP_UDP_1"/>
    <property type="match status" value="1"/>
</dbReference>
<comment type="function">
    <text evidence="2">Catalyzes the reversible phosphorolytic breakdown of the N-glycosidic bond in the beta-(deoxy)ribonucleoside molecules, with the formation of the corresponding free purine bases and pentose-1-phosphate.</text>
</comment>
<comment type="catalytic activity">
    <reaction evidence="2">
        <text>a purine D-ribonucleoside + phosphate = a purine nucleobase + alpha-D-ribose 1-phosphate</text>
        <dbReference type="Rhea" id="RHEA:19805"/>
        <dbReference type="ChEBI" id="CHEBI:26386"/>
        <dbReference type="ChEBI" id="CHEBI:43474"/>
        <dbReference type="ChEBI" id="CHEBI:57720"/>
        <dbReference type="ChEBI" id="CHEBI:142355"/>
        <dbReference type="EC" id="2.4.2.1"/>
    </reaction>
</comment>
<comment type="catalytic activity">
    <reaction evidence="2">
        <text>a purine 2'-deoxy-D-ribonucleoside + phosphate = a purine nucleobase + 2-deoxy-alpha-D-ribose 1-phosphate</text>
        <dbReference type="Rhea" id="RHEA:36431"/>
        <dbReference type="ChEBI" id="CHEBI:26386"/>
        <dbReference type="ChEBI" id="CHEBI:43474"/>
        <dbReference type="ChEBI" id="CHEBI:57259"/>
        <dbReference type="ChEBI" id="CHEBI:142361"/>
        <dbReference type="EC" id="2.4.2.1"/>
    </reaction>
</comment>
<comment type="subunit">
    <text evidence="2">Homohexamer; trimer of homodimers.</text>
</comment>
<comment type="similarity">
    <text evidence="2">Belongs to the PNP/UDP phosphorylase family.</text>
</comment>
<keyword id="KW-0328">Glycosyltransferase</keyword>
<keyword id="KW-1185">Reference proteome</keyword>
<keyword id="KW-0808">Transferase</keyword>
<name>DEOD_DICNV</name>
<gene>
    <name evidence="2" type="primary">deoD</name>
    <name type="ordered locus">DNO_0699</name>
</gene>
<reference key="1">
    <citation type="journal article" date="2007" name="Nat. Biotechnol.">
        <title>Genome sequence and identification of candidate vaccine antigens from the animal pathogen Dichelobacter nodosus.</title>
        <authorList>
            <person name="Myers G.S.A."/>
            <person name="Parker D."/>
            <person name="Al-Hasani K."/>
            <person name="Kennan R.M."/>
            <person name="Seemann T."/>
            <person name="Ren Q."/>
            <person name="Badger J.H."/>
            <person name="Selengut J.D."/>
            <person name="Deboy R.T."/>
            <person name="Tettelin H."/>
            <person name="Boyce J.D."/>
            <person name="McCarl V.P."/>
            <person name="Han X."/>
            <person name="Nelson W.C."/>
            <person name="Madupu R."/>
            <person name="Mohamoud Y."/>
            <person name="Holley T."/>
            <person name="Fedorova N."/>
            <person name="Khouri H."/>
            <person name="Bottomley S.P."/>
            <person name="Whittington R.J."/>
            <person name="Adler B."/>
            <person name="Songer J.G."/>
            <person name="Rood J.I."/>
            <person name="Paulsen I.T."/>
        </authorList>
    </citation>
    <scope>NUCLEOTIDE SEQUENCE [LARGE SCALE GENOMIC DNA]</scope>
    <source>
        <strain>VCS1703A</strain>
    </source>
</reference>
<proteinExistence type="inferred from homology"/>
<protein>
    <recommendedName>
        <fullName evidence="2">Purine nucleoside phosphorylase DeoD-type</fullName>
        <shortName evidence="2">PNP</shortName>
        <ecNumber evidence="2">2.4.2.1</ecNumber>
    </recommendedName>
</protein>
<sequence length="237" mass="25927">MTPHINAPAGAFAETVLFCGDPLRAQFIAHHFLKNAQEITNVRAMLGFTGEYQQHKLSVMGHGMGIPSCSIYAKELITEYGVKNLIRVGSCGAVLDEIKLHDVIIALSAATDSNVNRLRFRHYDFAATADYSIFSALIAAAAQQNITARVGTVFSTDSFYHADTELMDLLKRFHILGVEMEAAGLFGVAAEYGARAGCILTVSDHILRQETTTALERQTRFHDMITIALEAAVRLAH</sequence>
<feature type="chain" id="PRO_1000069624" description="Purine nucleoside phosphorylase DeoD-type">
    <location>
        <begin position="1"/>
        <end position="237"/>
    </location>
</feature>
<feature type="active site" description="Proton donor" evidence="2">
    <location>
        <position position="204"/>
    </location>
</feature>
<feature type="binding site" evidence="1">
    <location>
        <position position="4"/>
    </location>
    <ligand>
        <name>a purine D-ribonucleoside</name>
        <dbReference type="ChEBI" id="CHEBI:142355"/>
        <note>ligand shared between dimeric partners</note>
    </ligand>
</feature>
<feature type="binding site" description="in other chain" evidence="1">
    <location>
        <position position="20"/>
    </location>
    <ligand>
        <name>phosphate</name>
        <dbReference type="ChEBI" id="CHEBI:43474"/>
        <note>ligand shared between dimeric partners</note>
    </ligand>
</feature>
<feature type="binding site" description="in other chain" evidence="1">
    <location>
        <position position="24"/>
    </location>
    <ligand>
        <name>phosphate</name>
        <dbReference type="ChEBI" id="CHEBI:43474"/>
        <note>ligand shared between dimeric partners</note>
    </ligand>
</feature>
<feature type="binding site" evidence="1">
    <location>
        <position position="43"/>
    </location>
    <ligand>
        <name>phosphate</name>
        <dbReference type="ChEBI" id="CHEBI:43474"/>
        <note>ligand shared between dimeric partners</note>
    </ligand>
</feature>
<feature type="binding site" description="in other chain" evidence="1">
    <location>
        <begin position="87"/>
        <end position="90"/>
    </location>
    <ligand>
        <name>phosphate</name>
        <dbReference type="ChEBI" id="CHEBI:43474"/>
        <note>ligand shared between dimeric partners</note>
    </ligand>
</feature>
<feature type="binding site" description="in other chain" evidence="1">
    <location>
        <begin position="179"/>
        <end position="181"/>
    </location>
    <ligand>
        <name>a purine D-ribonucleoside</name>
        <dbReference type="ChEBI" id="CHEBI:142355"/>
        <note>ligand shared between dimeric partners</note>
    </ligand>
</feature>
<feature type="binding site" description="in other chain" evidence="1">
    <location>
        <begin position="203"/>
        <end position="204"/>
    </location>
    <ligand>
        <name>a purine D-ribonucleoside</name>
        <dbReference type="ChEBI" id="CHEBI:142355"/>
        <note>ligand shared between dimeric partners</note>
    </ligand>
</feature>
<feature type="site" description="Important for catalytic activity" evidence="2">
    <location>
        <position position="217"/>
    </location>
</feature>
<evidence type="ECO:0000250" key="1">
    <source>
        <dbReference type="UniProtKB" id="P50389"/>
    </source>
</evidence>
<evidence type="ECO:0000255" key="2">
    <source>
        <dbReference type="HAMAP-Rule" id="MF_01627"/>
    </source>
</evidence>
<organism>
    <name type="scientific">Dichelobacter nodosus (strain VCS1703A)</name>
    <dbReference type="NCBI Taxonomy" id="246195"/>
    <lineage>
        <taxon>Bacteria</taxon>
        <taxon>Pseudomonadati</taxon>
        <taxon>Pseudomonadota</taxon>
        <taxon>Gammaproteobacteria</taxon>
        <taxon>Cardiobacteriales</taxon>
        <taxon>Cardiobacteriaceae</taxon>
        <taxon>Dichelobacter</taxon>
    </lineage>
</organism>